<accession>Q9ZKQ7</accession>
<protein>
    <recommendedName>
        <fullName evidence="1">D-amino acid dehydrogenase</fullName>
        <shortName evidence="1">DAD</shortName>
        <ecNumber evidence="1">1.4.5.1</ecNumber>
    </recommendedName>
</protein>
<reference key="1">
    <citation type="journal article" date="1999" name="Nature">
        <title>Genomic sequence comparison of two unrelated isolates of the human gastric pathogen Helicobacter pylori.</title>
        <authorList>
            <person name="Alm R.A."/>
            <person name="Ling L.-S.L."/>
            <person name="Moir D.T."/>
            <person name="King B.L."/>
            <person name="Brown E.D."/>
            <person name="Doig P.C."/>
            <person name="Smith D.R."/>
            <person name="Noonan B."/>
            <person name="Guild B.C."/>
            <person name="deJonge B.L."/>
            <person name="Carmel G."/>
            <person name="Tummino P.J."/>
            <person name="Caruso A."/>
            <person name="Uria-Nickelsen M."/>
            <person name="Mills D.M."/>
            <person name="Ives C."/>
            <person name="Gibson R."/>
            <person name="Merberg D."/>
            <person name="Mills S.D."/>
            <person name="Jiang Q."/>
            <person name="Taylor D.E."/>
            <person name="Vovis G.F."/>
            <person name="Trust T.J."/>
        </authorList>
    </citation>
    <scope>NUCLEOTIDE SEQUENCE [LARGE SCALE GENOMIC DNA]</scope>
    <source>
        <strain>J99 / ATCC 700824</strain>
    </source>
</reference>
<name>DADA_HELPJ</name>
<feature type="chain" id="PRO_0000166163" description="D-amino acid dehydrogenase">
    <location>
        <begin position="1"/>
        <end position="410"/>
    </location>
</feature>
<feature type="binding site" evidence="1">
    <location>
        <begin position="9"/>
        <end position="14"/>
    </location>
    <ligand>
        <name>FAD</name>
        <dbReference type="ChEBI" id="CHEBI:57692"/>
    </ligand>
</feature>
<organism>
    <name type="scientific">Helicobacter pylori (strain J99 / ATCC 700824)</name>
    <name type="common">Campylobacter pylori J99</name>
    <dbReference type="NCBI Taxonomy" id="85963"/>
    <lineage>
        <taxon>Bacteria</taxon>
        <taxon>Pseudomonadati</taxon>
        <taxon>Campylobacterota</taxon>
        <taxon>Epsilonproteobacteria</taxon>
        <taxon>Campylobacterales</taxon>
        <taxon>Helicobacteraceae</taxon>
        <taxon>Helicobacter</taxon>
    </lineage>
</organism>
<proteinExistence type="inferred from homology"/>
<dbReference type="EC" id="1.4.5.1" evidence="1"/>
<dbReference type="EMBL" id="AE001439">
    <property type="protein sequence ID" value="AAD06449.1"/>
    <property type="molecule type" value="Genomic_DNA"/>
</dbReference>
<dbReference type="PIR" id="H71877">
    <property type="entry name" value="H71877"/>
</dbReference>
<dbReference type="RefSeq" id="WP_000712569.1">
    <property type="nucleotide sequence ID" value="NC_000921.1"/>
</dbReference>
<dbReference type="SMR" id="Q9ZKQ7"/>
<dbReference type="KEGG" id="hpj:jhp_0878"/>
<dbReference type="eggNOG" id="COG0665">
    <property type="taxonomic scope" value="Bacteria"/>
</dbReference>
<dbReference type="Proteomes" id="UP000000804">
    <property type="component" value="Chromosome"/>
</dbReference>
<dbReference type="GO" id="GO:0005737">
    <property type="term" value="C:cytoplasm"/>
    <property type="evidence" value="ECO:0007669"/>
    <property type="project" value="TreeGrafter"/>
</dbReference>
<dbReference type="GO" id="GO:0005886">
    <property type="term" value="C:plasma membrane"/>
    <property type="evidence" value="ECO:0007669"/>
    <property type="project" value="UniProtKB-SubCell"/>
</dbReference>
<dbReference type="GO" id="GO:0008718">
    <property type="term" value="F:D-amino-acid dehydrogenase activity"/>
    <property type="evidence" value="ECO:0007669"/>
    <property type="project" value="UniProtKB-EC"/>
</dbReference>
<dbReference type="Gene3D" id="3.30.9.10">
    <property type="entry name" value="D-Amino Acid Oxidase, subunit A, domain 2"/>
    <property type="match status" value="1"/>
</dbReference>
<dbReference type="Gene3D" id="3.50.50.60">
    <property type="entry name" value="FAD/NAD(P)-binding domain"/>
    <property type="match status" value="2"/>
</dbReference>
<dbReference type="InterPro" id="IPR006076">
    <property type="entry name" value="FAD-dep_OxRdtase"/>
</dbReference>
<dbReference type="InterPro" id="IPR036188">
    <property type="entry name" value="FAD/NAD-bd_sf"/>
</dbReference>
<dbReference type="PANTHER" id="PTHR13847:SF286">
    <property type="entry name" value="D-AMINO ACID DEHYDROGENASE"/>
    <property type="match status" value="1"/>
</dbReference>
<dbReference type="PANTHER" id="PTHR13847">
    <property type="entry name" value="SARCOSINE DEHYDROGENASE-RELATED"/>
    <property type="match status" value="1"/>
</dbReference>
<dbReference type="Pfam" id="PF01266">
    <property type="entry name" value="DAO"/>
    <property type="match status" value="1"/>
</dbReference>
<dbReference type="SUPFAM" id="SSF51905">
    <property type="entry name" value="FAD/NAD(P)-binding domain"/>
    <property type="match status" value="1"/>
</dbReference>
<keyword id="KW-0997">Cell inner membrane</keyword>
<keyword id="KW-1003">Cell membrane</keyword>
<keyword id="KW-0249">Electron transport</keyword>
<keyword id="KW-0274">FAD</keyword>
<keyword id="KW-0285">Flavoprotein</keyword>
<keyword id="KW-0472">Membrane</keyword>
<keyword id="KW-0560">Oxidoreductase</keyword>
<keyword id="KW-0813">Transport</keyword>
<comment type="function">
    <text evidence="1">Catalyzes the oxidative deamination of D-amino acids. Has broad substrate specificity; is mostly active on D-proline, and to a lesser extent, on several other D-amino acids such as D-alanine, D-phenylalanine and D-serine. Mediates electron transport from D-proline to coenzyme Q1 in vitro, and is involved in the electron transport chain from D-proline to the c-type cytochrome in vivo.</text>
</comment>
<comment type="catalytic activity">
    <reaction evidence="1">
        <text>a D-alpha-amino acid + a quinone + H2O = a 2-oxocarboxylate + a quinol + NH4(+)</text>
        <dbReference type="Rhea" id="RHEA:45996"/>
        <dbReference type="ChEBI" id="CHEBI:15377"/>
        <dbReference type="ChEBI" id="CHEBI:24646"/>
        <dbReference type="ChEBI" id="CHEBI:28938"/>
        <dbReference type="ChEBI" id="CHEBI:35179"/>
        <dbReference type="ChEBI" id="CHEBI:59871"/>
        <dbReference type="ChEBI" id="CHEBI:132124"/>
        <dbReference type="EC" id="1.4.5.1"/>
    </reaction>
</comment>
<comment type="cofactor">
    <cofactor evidence="1">
        <name>FAD</name>
        <dbReference type="ChEBI" id="CHEBI:57692"/>
    </cofactor>
</comment>
<comment type="subcellular location">
    <subcellularLocation>
        <location evidence="1">Cell inner membrane</location>
        <topology evidence="2">Peripheral membrane protein</topology>
    </subcellularLocation>
</comment>
<comment type="similarity">
    <text evidence="2">Belongs to the DadA oxidoreductase family.</text>
</comment>
<evidence type="ECO:0000250" key="1">
    <source>
        <dbReference type="UniProtKB" id="A3KEZ1"/>
    </source>
</evidence>
<evidence type="ECO:0000305" key="2"/>
<sequence>MKKEVVVIGGGIVGLSCAYSMHKLGHKVCVIEKSDGTNGTSFGNAGLISAFKKAPLSCPGVVLDTLKLMLKNQAPLKFHFGLNLKLYQWILKFMTSANAKSTHRTIALFERYGWLSIDMYHQMLKDGMDFWYKEDGLLMIYTLEESFEKKLKTCDNSGAYKILNVKETKEYMPIANDNICGSVLLTENAHVDPGEVVRSLQQYLQNAGVEFLYNEEVIDFEFKNNLIEGVITHKEKIQAETIILATGANPTLIKKTKNDFLMMGAKGYSITFKMPEELKPKTSSLFADIFMAMTPRRDTVRITSKLELNTNNALIDKEQIANMKKNLAAFTQPFEMKDAIEWCGFRPLTPNDIPYLGYDKRYKNLIHATGLGWLGITFGPAIGKIIANLSQDGANEKNADIMLFSAFFRD</sequence>
<gene>
    <name evidence="1" type="primary">dadA</name>
    <name type="ordered locus">jhp_0878</name>
</gene>